<dbReference type="EMBL" id="AK075794">
    <property type="protein sequence ID" value="BAC35963.1"/>
    <property type="molecule type" value="mRNA"/>
</dbReference>
<dbReference type="EMBL" id="AC158612">
    <property type="status" value="NOT_ANNOTATED_CDS"/>
    <property type="molecule type" value="Genomic_DNA"/>
</dbReference>
<dbReference type="EMBL" id="CH466553">
    <property type="protein sequence ID" value="EDL31765.1"/>
    <property type="molecule type" value="Genomic_DNA"/>
</dbReference>
<dbReference type="EMBL" id="BC010330">
    <property type="protein sequence ID" value="AAH10330.1"/>
    <property type="molecule type" value="mRNA"/>
</dbReference>
<dbReference type="CCDS" id="CCDS35954.1"/>
<dbReference type="RefSeq" id="NP_080707.2">
    <property type="nucleotide sequence ID" value="NM_026431.2"/>
</dbReference>
<dbReference type="SMR" id="Q8C6G1"/>
<dbReference type="FunCoup" id="Q8C6G1">
    <property type="interactions" value="712"/>
</dbReference>
<dbReference type="STRING" id="10090.ENSMUSP00000101036"/>
<dbReference type="iPTMnet" id="Q8C6G1"/>
<dbReference type="PhosphoSitePlus" id="Q8C6G1"/>
<dbReference type="PaxDb" id="10090-ENSMUSP00000101036"/>
<dbReference type="Pumba" id="Q8C6G1"/>
<dbReference type="Antibodypedia" id="24213">
    <property type="antibodies" value="155 antibodies from 20 providers"/>
</dbReference>
<dbReference type="Ensembl" id="ENSMUST00000105397.10">
    <property type="protein sequence ID" value="ENSMUSP00000101036.4"/>
    <property type="gene ID" value="ENSMUSG00000020284.17"/>
</dbReference>
<dbReference type="GeneID" id="67884"/>
<dbReference type="KEGG" id="mmu:67884"/>
<dbReference type="UCSC" id="uc007fwn.1">
    <property type="organism name" value="mouse"/>
</dbReference>
<dbReference type="AGR" id="MGI:1915134"/>
<dbReference type="CTD" id="755"/>
<dbReference type="MGI" id="MGI:1915134">
    <property type="gene designation" value="Cfap410"/>
</dbReference>
<dbReference type="VEuPathDB" id="HostDB:ENSMUSG00000020284"/>
<dbReference type="eggNOG" id="KOG2123">
    <property type="taxonomic scope" value="Eukaryota"/>
</dbReference>
<dbReference type="GeneTree" id="ENSGT00390000018807"/>
<dbReference type="HOGENOM" id="CLU_062035_1_0_1"/>
<dbReference type="InParanoid" id="Q8C6G1"/>
<dbReference type="OMA" id="ISICHEL"/>
<dbReference type="OrthoDB" id="1517790at2759"/>
<dbReference type="PhylomeDB" id="Q8C6G1"/>
<dbReference type="TreeFam" id="TF326666"/>
<dbReference type="BioGRID-ORCS" id="67884">
    <property type="hits" value="2 hits in 77 CRISPR screens"/>
</dbReference>
<dbReference type="ChiTaRS" id="Cfap410">
    <property type="organism name" value="mouse"/>
</dbReference>
<dbReference type="PRO" id="PR:Q8C6G1"/>
<dbReference type="Proteomes" id="UP000000589">
    <property type="component" value="Chromosome 10"/>
</dbReference>
<dbReference type="RNAct" id="Q8C6G1">
    <property type="molecule type" value="protein"/>
</dbReference>
<dbReference type="Bgee" id="ENSMUSG00000020284">
    <property type="expression patterns" value="Expressed in floor plate of midbrain and 234 other cell types or tissues"/>
</dbReference>
<dbReference type="ExpressionAtlas" id="Q8C6G1">
    <property type="expression patterns" value="baseline and differential"/>
</dbReference>
<dbReference type="GO" id="GO:0036064">
    <property type="term" value="C:ciliary basal body"/>
    <property type="evidence" value="ECO:0000314"/>
    <property type="project" value="UniProtKB"/>
</dbReference>
<dbReference type="GO" id="GO:0005737">
    <property type="term" value="C:cytoplasm"/>
    <property type="evidence" value="ECO:0000250"/>
    <property type="project" value="UniProtKB"/>
</dbReference>
<dbReference type="GO" id="GO:0005829">
    <property type="term" value="C:cytosol"/>
    <property type="evidence" value="ECO:0007669"/>
    <property type="project" value="Ensembl"/>
</dbReference>
<dbReference type="GO" id="GO:0005794">
    <property type="term" value="C:Golgi apparatus"/>
    <property type="evidence" value="ECO:0007669"/>
    <property type="project" value="Ensembl"/>
</dbReference>
<dbReference type="GO" id="GO:0005739">
    <property type="term" value="C:mitochondrion"/>
    <property type="evidence" value="ECO:0000250"/>
    <property type="project" value="UniProtKB"/>
</dbReference>
<dbReference type="GO" id="GO:0005654">
    <property type="term" value="C:nucleoplasm"/>
    <property type="evidence" value="ECO:0007669"/>
    <property type="project" value="Ensembl"/>
</dbReference>
<dbReference type="GO" id="GO:0097733">
    <property type="term" value="C:photoreceptor cell cilium"/>
    <property type="evidence" value="ECO:0000314"/>
    <property type="project" value="MGI"/>
</dbReference>
<dbReference type="GO" id="GO:0032391">
    <property type="term" value="C:photoreceptor connecting cilium"/>
    <property type="evidence" value="ECO:0000314"/>
    <property type="project" value="UniProtKB"/>
</dbReference>
<dbReference type="GO" id="GO:0001750">
    <property type="term" value="C:photoreceptor outer segment"/>
    <property type="evidence" value="ECO:0000250"/>
    <property type="project" value="UniProtKB"/>
</dbReference>
<dbReference type="GO" id="GO:0005886">
    <property type="term" value="C:plasma membrane"/>
    <property type="evidence" value="ECO:0007669"/>
    <property type="project" value="Ensembl"/>
</dbReference>
<dbReference type="GO" id="GO:0060271">
    <property type="term" value="P:cilium assembly"/>
    <property type="evidence" value="ECO:0000315"/>
    <property type="project" value="MGI"/>
</dbReference>
<dbReference type="GO" id="GO:0007010">
    <property type="term" value="P:cytoskeleton organization"/>
    <property type="evidence" value="ECO:0007669"/>
    <property type="project" value="Ensembl"/>
</dbReference>
<dbReference type="GO" id="GO:0006974">
    <property type="term" value="P:DNA damage response"/>
    <property type="evidence" value="ECO:0007669"/>
    <property type="project" value="UniProtKB-KW"/>
</dbReference>
<dbReference type="GO" id="GO:0008360">
    <property type="term" value="P:regulation of cell shape"/>
    <property type="evidence" value="ECO:0007669"/>
    <property type="project" value="Ensembl"/>
</dbReference>
<dbReference type="GO" id="GO:0007224">
    <property type="term" value="P:smoothened signaling pathway"/>
    <property type="evidence" value="ECO:0000315"/>
    <property type="project" value="MGI"/>
</dbReference>
<dbReference type="FunFam" id="3.80.10.10:FF:000094">
    <property type="entry name" value="protein C21orf2 isoform X1"/>
    <property type="match status" value="1"/>
</dbReference>
<dbReference type="Gene3D" id="3.80.10.10">
    <property type="entry name" value="Ribonuclease Inhibitor"/>
    <property type="match status" value="1"/>
</dbReference>
<dbReference type="InterPro" id="IPR001611">
    <property type="entry name" value="Leu-rich_rpt"/>
</dbReference>
<dbReference type="InterPro" id="IPR032675">
    <property type="entry name" value="LRR_dom_sf"/>
</dbReference>
<dbReference type="PANTHER" id="PTHR18849:SF0">
    <property type="entry name" value="CILIA- AND FLAGELLA-ASSOCIATED PROTEIN 410-RELATED"/>
    <property type="match status" value="1"/>
</dbReference>
<dbReference type="PANTHER" id="PTHR18849">
    <property type="entry name" value="LEUCINE RICH REPEAT PROTEIN"/>
    <property type="match status" value="1"/>
</dbReference>
<dbReference type="SUPFAM" id="SSF52058">
    <property type="entry name" value="L domain-like"/>
    <property type="match status" value="1"/>
</dbReference>
<dbReference type="PROSITE" id="PS51450">
    <property type="entry name" value="LRR"/>
    <property type="match status" value="2"/>
</dbReference>
<protein>
    <recommendedName>
        <fullName evidence="1">Cilia- and flagella-associated protein 410</fullName>
    </recommendedName>
</protein>
<keyword id="KW-0966">Cell projection</keyword>
<keyword id="KW-0970">Cilium biogenesis/degradation</keyword>
<keyword id="KW-0963">Cytoplasm</keyword>
<keyword id="KW-0206">Cytoskeleton</keyword>
<keyword id="KW-0227">DNA damage</keyword>
<keyword id="KW-0433">Leucine-rich repeat</keyword>
<keyword id="KW-0496">Mitochondrion</keyword>
<keyword id="KW-1185">Reference proteome</keyword>
<keyword id="KW-0677">Repeat</keyword>
<accession>Q8C6G1</accession>
<accession>Q91Z02</accession>
<evidence type="ECO:0000250" key="1">
    <source>
        <dbReference type="UniProtKB" id="O43822"/>
    </source>
</evidence>
<evidence type="ECO:0000256" key="2">
    <source>
        <dbReference type="SAM" id="MobiDB-lite"/>
    </source>
</evidence>
<evidence type="ECO:0000269" key="3">
    <source>
    </source>
</evidence>
<evidence type="ECO:0000269" key="4">
    <source>
    </source>
</evidence>
<evidence type="ECO:0000269" key="5">
    <source>
    </source>
</evidence>
<evidence type="ECO:0000269" key="6">
    <source>
    </source>
</evidence>
<evidence type="ECO:0000269" key="7">
    <source>
    </source>
</evidence>
<evidence type="ECO:0000305" key="8"/>
<feature type="chain" id="PRO_0000419170" description="Cilia- and flagella-associated protein 410">
    <location>
        <begin position="1"/>
        <end position="249"/>
    </location>
</feature>
<feature type="repeat" description="LRR 1">
    <location>
        <begin position="19"/>
        <end position="40"/>
    </location>
</feature>
<feature type="repeat" description="LRR 2">
    <location>
        <begin position="41"/>
        <end position="62"/>
    </location>
</feature>
<feature type="repeat" description="LRR 3">
    <location>
        <begin position="63"/>
        <end position="84"/>
    </location>
</feature>
<feature type="domain" description="LRRCT">
    <location>
        <begin position="97"/>
        <end position="137"/>
    </location>
</feature>
<feature type="region of interest" description="Disordered" evidence="2">
    <location>
        <begin position="146"/>
        <end position="203"/>
    </location>
</feature>
<feature type="compositionally biased region" description="Polar residues" evidence="2">
    <location>
        <begin position="162"/>
        <end position="175"/>
    </location>
</feature>
<feature type="sequence conflict" description="In Ref. 4; AAH10330." evidence="8" ref="4">
    <original>N</original>
    <variation>H</variation>
    <location>
        <position position="162"/>
    </location>
</feature>
<feature type="sequence conflict" description="In Ref. 4; AAH10330." evidence="8" ref="4">
    <original>N</original>
    <variation>S</variation>
    <location>
        <position position="206"/>
    </location>
</feature>
<reference key="1">
    <citation type="journal article" date="2005" name="Science">
        <title>The transcriptional landscape of the mammalian genome.</title>
        <authorList>
            <person name="Carninci P."/>
            <person name="Kasukawa T."/>
            <person name="Katayama S."/>
            <person name="Gough J."/>
            <person name="Frith M.C."/>
            <person name="Maeda N."/>
            <person name="Oyama R."/>
            <person name="Ravasi T."/>
            <person name="Lenhard B."/>
            <person name="Wells C."/>
            <person name="Kodzius R."/>
            <person name="Shimokawa K."/>
            <person name="Bajic V.B."/>
            <person name="Brenner S.E."/>
            <person name="Batalov S."/>
            <person name="Forrest A.R."/>
            <person name="Zavolan M."/>
            <person name="Davis M.J."/>
            <person name="Wilming L.G."/>
            <person name="Aidinis V."/>
            <person name="Allen J.E."/>
            <person name="Ambesi-Impiombato A."/>
            <person name="Apweiler R."/>
            <person name="Aturaliya R.N."/>
            <person name="Bailey T.L."/>
            <person name="Bansal M."/>
            <person name="Baxter L."/>
            <person name="Beisel K.W."/>
            <person name="Bersano T."/>
            <person name="Bono H."/>
            <person name="Chalk A.M."/>
            <person name="Chiu K.P."/>
            <person name="Choudhary V."/>
            <person name="Christoffels A."/>
            <person name="Clutterbuck D.R."/>
            <person name="Crowe M.L."/>
            <person name="Dalla E."/>
            <person name="Dalrymple B.P."/>
            <person name="de Bono B."/>
            <person name="Della Gatta G."/>
            <person name="di Bernardo D."/>
            <person name="Down T."/>
            <person name="Engstrom P."/>
            <person name="Fagiolini M."/>
            <person name="Faulkner G."/>
            <person name="Fletcher C.F."/>
            <person name="Fukushima T."/>
            <person name="Furuno M."/>
            <person name="Futaki S."/>
            <person name="Gariboldi M."/>
            <person name="Georgii-Hemming P."/>
            <person name="Gingeras T.R."/>
            <person name="Gojobori T."/>
            <person name="Green R.E."/>
            <person name="Gustincich S."/>
            <person name="Harbers M."/>
            <person name="Hayashi Y."/>
            <person name="Hensch T.K."/>
            <person name="Hirokawa N."/>
            <person name="Hill D."/>
            <person name="Huminiecki L."/>
            <person name="Iacono M."/>
            <person name="Ikeo K."/>
            <person name="Iwama A."/>
            <person name="Ishikawa T."/>
            <person name="Jakt M."/>
            <person name="Kanapin A."/>
            <person name="Katoh M."/>
            <person name="Kawasawa Y."/>
            <person name="Kelso J."/>
            <person name="Kitamura H."/>
            <person name="Kitano H."/>
            <person name="Kollias G."/>
            <person name="Krishnan S.P."/>
            <person name="Kruger A."/>
            <person name="Kummerfeld S.K."/>
            <person name="Kurochkin I.V."/>
            <person name="Lareau L.F."/>
            <person name="Lazarevic D."/>
            <person name="Lipovich L."/>
            <person name="Liu J."/>
            <person name="Liuni S."/>
            <person name="McWilliam S."/>
            <person name="Madan Babu M."/>
            <person name="Madera M."/>
            <person name="Marchionni L."/>
            <person name="Matsuda H."/>
            <person name="Matsuzawa S."/>
            <person name="Miki H."/>
            <person name="Mignone F."/>
            <person name="Miyake S."/>
            <person name="Morris K."/>
            <person name="Mottagui-Tabar S."/>
            <person name="Mulder N."/>
            <person name="Nakano N."/>
            <person name="Nakauchi H."/>
            <person name="Ng P."/>
            <person name="Nilsson R."/>
            <person name="Nishiguchi S."/>
            <person name="Nishikawa S."/>
            <person name="Nori F."/>
            <person name="Ohara O."/>
            <person name="Okazaki Y."/>
            <person name="Orlando V."/>
            <person name="Pang K.C."/>
            <person name="Pavan W.J."/>
            <person name="Pavesi G."/>
            <person name="Pesole G."/>
            <person name="Petrovsky N."/>
            <person name="Piazza S."/>
            <person name="Reed J."/>
            <person name="Reid J.F."/>
            <person name="Ring B.Z."/>
            <person name="Ringwald M."/>
            <person name="Rost B."/>
            <person name="Ruan Y."/>
            <person name="Salzberg S.L."/>
            <person name="Sandelin A."/>
            <person name="Schneider C."/>
            <person name="Schoenbach C."/>
            <person name="Sekiguchi K."/>
            <person name="Semple C.A."/>
            <person name="Seno S."/>
            <person name="Sessa L."/>
            <person name="Sheng Y."/>
            <person name="Shibata Y."/>
            <person name="Shimada H."/>
            <person name="Shimada K."/>
            <person name="Silva D."/>
            <person name="Sinclair B."/>
            <person name="Sperling S."/>
            <person name="Stupka E."/>
            <person name="Sugiura K."/>
            <person name="Sultana R."/>
            <person name="Takenaka Y."/>
            <person name="Taki K."/>
            <person name="Tammoja K."/>
            <person name="Tan S.L."/>
            <person name="Tang S."/>
            <person name="Taylor M.S."/>
            <person name="Tegner J."/>
            <person name="Teichmann S.A."/>
            <person name="Ueda H.R."/>
            <person name="van Nimwegen E."/>
            <person name="Verardo R."/>
            <person name="Wei C.L."/>
            <person name="Yagi K."/>
            <person name="Yamanishi H."/>
            <person name="Zabarovsky E."/>
            <person name="Zhu S."/>
            <person name="Zimmer A."/>
            <person name="Hide W."/>
            <person name="Bult C."/>
            <person name="Grimmond S.M."/>
            <person name="Teasdale R.D."/>
            <person name="Liu E.T."/>
            <person name="Brusic V."/>
            <person name="Quackenbush J."/>
            <person name="Wahlestedt C."/>
            <person name="Mattick J.S."/>
            <person name="Hume D.A."/>
            <person name="Kai C."/>
            <person name="Sasaki D."/>
            <person name="Tomaru Y."/>
            <person name="Fukuda S."/>
            <person name="Kanamori-Katayama M."/>
            <person name="Suzuki M."/>
            <person name="Aoki J."/>
            <person name="Arakawa T."/>
            <person name="Iida J."/>
            <person name="Imamura K."/>
            <person name="Itoh M."/>
            <person name="Kato T."/>
            <person name="Kawaji H."/>
            <person name="Kawagashira N."/>
            <person name="Kawashima T."/>
            <person name="Kojima M."/>
            <person name="Kondo S."/>
            <person name="Konno H."/>
            <person name="Nakano K."/>
            <person name="Ninomiya N."/>
            <person name="Nishio T."/>
            <person name="Okada M."/>
            <person name="Plessy C."/>
            <person name="Shibata K."/>
            <person name="Shiraki T."/>
            <person name="Suzuki S."/>
            <person name="Tagami M."/>
            <person name="Waki K."/>
            <person name="Watahiki A."/>
            <person name="Okamura-Oho Y."/>
            <person name="Suzuki H."/>
            <person name="Kawai J."/>
            <person name="Hayashizaki Y."/>
        </authorList>
    </citation>
    <scope>NUCLEOTIDE SEQUENCE [LARGE SCALE MRNA]</scope>
    <source>
        <strain>C57BL/6J</strain>
        <tissue>Pancreas</tissue>
    </source>
</reference>
<reference key="2">
    <citation type="journal article" date="2009" name="PLoS Biol.">
        <title>Lineage-specific biology revealed by a finished genome assembly of the mouse.</title>
        <authorList>
            <person name="Church D.M."/>
            <person name="Goodstadt L."/>
            <person name="Hillier L.W."/>
            <person name="Zody M.C."/>
            <person name="Goldstein S."/>
            <person name="She X."/>
            <person name="Bult C.J."/>
            <person name="Agarwala R."/>
            <person name="Cherry J.L."/>
            <person name="DiCuccio M."/>
            <person name="Hlavina W."/>
            <person name="Kapustin Y."/>
            <person name="Meric P."/>
            <person name="Maglott D."/>
            <person name="Birtle Z."/>
            <person name="Marques A.C."/>
            <person name="Graves T."/>
            <person name="Zhou S."/>
            <person name="Teague B."/>
            <person name="Potamousis K."/>
            <person name="Churas C."/>
            <person name="Place M."/>
            <person name="Herschleb J."/>
            <person name="Runnheim R."/>
            <person name="Forrest D."/>
            <person name="Amos-Landgraf J."/>
            <person name="Schwartz D.C."/>
            <person name="Cheng Z."/>
            <person name="Lindblad-Toh K."/>
            <person name="Eichler E.E."/>
            <person name="Ponting C.P."/>
        </authorList>
    </citation>
    <scope>NUCLEOTIDE SEQUENCE [LARGE SCALE GENOMIC DNA]</scope>
    <source>
        <strain>C57BL/6J</strain>
    </source>
</reference>
<reference key="3">
    <citation type="submission" date="2005-09" db="EMBL/GenBank/DDBJ databases">
        <authorList>
            <person name="Mural R.J."/>
            <person name="Adams M.D."/>
            <person name="Myers E.W."/>
            <person name="Smith H.O."/>
            <person name="Venter J.C."/>
        </authorList>
    </citation>
    <scope>NUCLEOTIDE SEQUENCE [LARGE SCALE GENOMIC DNA]</scope>
</reference>
<reference key="4">
    <citation type="journal article" date="2004" name="Genome Res.">
        <title>The status, quality, and expansion of the NIH full-length cDNA project: the Mammalian Gene Collection (MGC).</title>
        <authorList>
            <consortium name="The MGC Project Team"/>
        </authorList>
    </citation>
    <scope>NUCLEOTIDE SEQUENCE [LARGE SCALE MRNA]</scope>
    <source>
        <strain>Czech II</strain>
        <tissue>Mammary tumor</tissue>
    </source>
</reference>
<reference key="5">
    <citation type="journal article" date="2010" name="Cell">
        <title>A tissue-specific atlas of mouse protein phosphorylation and expression.</title>
        <authorList>
            <person name="Huttlin E.L."/>
            <person name="Jedrychowski M.P."/>
            <person name="Elias J.E."/>
            <person name="Goswami T."/>
            <person name="Rad R."/>
            <person name="Beausoleil S.A."/>
            <person name="Villen J."/>
            <person name="Haas W."/>
            <person name="Sowa M.E."/>
            <person name="Gygi S.P."/>
        </authorList>
    </citation>
    <scope>IDENTIFICATION BY MASS SPECTROMETRY [LARGE SCALE ANALYSIS]</scope>
    <source>
        <tissue>Testis</tissue>
    </source>
</reference>
<reference key="6">
    <citation type="journal article" date="2011" name="Mol. Biol. Cell">
        <title>Functional characterization of putative cilia genes by high-content analysis.</title>
        <authorList>
            <person name="Lai C.K."/>
            <person name="Gupta N."/>
            <person name="Wen X."/>
            <person name="Rangell L."/>
            <person name="Chih B."/>
            <person name="Peterson A.S."/>
            <person name="Bazan J.F."/>
            <person name="Li L."/>
            <person name="Scales S.J."/>
        </authorList>
    </citation>
    <scope>DISRUPTION PHENOTYPE</scope>
    <scope>FUNCTION</scope>
</reference>
<reference key="7">
    <citation type="journal article" date="2015" name="Br. J. Ophthalmol.">
        <title>C21orf2 is mutated in recessive early-onset retinal dystrophy with macular staphyloma and encodes a protein that localises to the photoreceptor primary cilium.</title>
        <authorList>
            <person name="Khan A.O."/>
            <person name="Eisenberger T."/>
            <person name="Nagel-Wolfrum K."/>
            <person name="Wolfrum U."/>
            <person name="Bolz H.J."/>
        </authorList>
    </citation>
    <scope>SUBCELLULAR LOCATION</scope>
    <scope>TISSUE SPECIFICITY</scope>
</reference>
<reference key="8">
    <citation type="journal article" date="2015" name="Nat. Cell Biol.">
        <title>An siRNA-based functional genomics screen for the identification of regulators of ciliogenesis and ciliopathy genes.</title>
        <authorList>
            <consortium name="UK10K Consortium"/>
            <consortium name="University of Washington Center for Mendelian Genomics"/>
            <person name="Wheway G."/>
            <person name="Schmidts M."/>
            <person name="Mans D.A."/>
            <person name="Szymanska K."/>
            <person name="Nguyen T.M."/>
            <person name="Racher H."/>
            <person name="Phelps I.G."/>
            <person name="Toedt G."/>
            <person name="Kennedy J."/>
            <person name="Wunderlich K.A."/>
            <person name="Sorusch N."/>
            <person name="Abdelhamed Z.A."/>
            <person name="Natarajan S."/>
            <person name="Herridge W."/>
            <person name="van Reeuwijk J."/>
            <person name="Horn N."/>
            <person name="Boldt K."/>
            <person name="Parry D.A."/>
            <person name="Letteboer S.J."/>
            <person name="Roosing S."/>
            <person name="Adams M."/>
            <person name="Bell S.M."/>
            <person name="Bond J."/>
            <person name="Higgins J."/>
            <person name="Morrison E.E."/>
            <person name="Tomlinson D.C."/>
            <person name="Slaats G.G."/>
            <person name="van Dam T.J."/>
            <person name="Huang L."/>
            <person name="Kessler K."/>
            <person name="Giessl A."/>
            <person name="Logan C.V."/>
            <person name="Boyle E.A."/>
            <person name="Shendure J."/>
            <person name="Anazi S."/>
            <person name="Aldahmesh M."/>
            <person name="Al Hazzaa S."/>
            <person name="Hegele R.A."/>
            <person name="Ober C."/>
            <person name="Frosk P."/>
            <person name="Mhanni A.A."/>
            <person name="Chodirker B.N."/>
            <person name="Chudley A.E."/>
            <person name="Lamont R."/>
            <person name="Bernier F.P."/>
            <person name="Beaulieu C.L."/>
            <person name="Gordon P."/>
            <person name="Pon R.T."/>
            <person name="Donahue C."/>
            <person name="Barkovich A.J."/>
            <person name="Wolf L."/>
            <person name="Toomes C."/>
            <person name="Thiel C.T."/>
            <person name="Boycott K.M."/>
            <person name="McKibbin M."/>
            <person name="Inglehearn C.F."/>
            <person name="Stewart F."/>
            <person name="Omran H."/>
            <person name="Huynen M.A."/>
            <person name="Sergouniotis P.I."/>
            <person name="Alkuraya F.S."/>
            <person name="Parboosingh J.S."/>
            <person name="Innes A.M."/>
            <person name="Willoughby C.E."/>
            <person name="Giles R.H."/>
            <person name="Webster A.R."/>
            <person name="Ueffing M."/>
            <person name="Blacque O."/>
            <person name="Gleeson J.G."/>
            <person name="Wolfrum U."/>
            <person name="Beales P.L."/>
            <person name="Gibson T."/>
            <person name="Doherty D."/>
            <person name="Mitchison H.M."/>
            <person name="Roepman R."/>
            <person name="Johnson C.A."/>
        </authorList>
    </citation>
    <scope>SUBCELLULAR LOCATION</scope>
</reference>
<reference key="9">
    <citation type="journal article" date="2016" name="Invest. Ophthalmol. Vis. Sci.">
        <title>Identification of novel mutations in the LRR-Cap domain of C21orf2 in Japanese patients with retinitis pigmentosa and Cone-Rod Dystrophy.</title>
        <authorList>
            <person name="Suga A."/>
            <person name="Mizota A."/>
            <person name="Kato M."/>
            <person name="Kuniyoshi K."/>
            <person name="Yoshitake K."/>
            <person name="Sultan W."/>
            <person name="Yamazaki M."/>
            <person name="Shimomura Y."/>
            <person name="Ikeo K."/>
            <person name="Tsunoda K."/>
            <person name="Iwata T."/>
        </authorList>
    </citation>
    <scope>SUBCELLULAR LOCATION</scope>
    <scope>TISSUE SPECIFICITY</scope>
</reference>
<reference key="10">
    <citation type="journal article" date="2016" name="PLoS ONE">
        <title>Axial spondylometaphyseal dysplasia is caused by C21orf2 mutations.</title>
        <authorList>
            <person name="Wang Z."/>
            <person name="Iida A."/>
            <person name="Miyake N."/>
            <person name="Nishiguchi K.M."/>
            <person name="Fujita K."/>
            <person name="Nakazawa T."/>
            <person name="Alswaid A."/>
            <person name="Albalwi M.A."/>
            <person name="Kim O.H."/>
            <person name="Cho T.J."/>
            <person name="Lim G.Y."/>
            <person name="Isidor B."/>
            <person name="David A."/>
            <person name="Rustad C.F."/>
            <person name="Merckoll E."/>
            <person name="Westvik J."/>
            <person name="Stattin E.L."/>
            <person name="Grigelioniene G."/>
            <person name="Kou I."/>
            <person name="Nakajima M."/>
            <person name="Ohashi H."/>
            <person name="Smithson S."/>
            <person name="Matsumoto N."/>
            <person name="Nishimura G."/>
            <person name="Ikegawa S."/>
        </authorList>
    </citation>
    <scope>INDUCTION</scope>
    <scope>SUBCELLULAR LOCATION</scope>
</reference>
<comment type="function">
    <text evidence="1 3">Plays a role in cilia formation and/or maintenance (PubMed:21289087). Plays a role in the regulation of cell morphology and cytoskeletal organization (By similarity). Involved in DNA damage repair (By similarity).</text>
</comment>
<comment type="subunit">
    <text evidence="1">Found in a complex with CFAP410, NEK1 and SPATA7 (By similarity). Interacts with NEK1 (By similarity).</text>
</comment>
<comment type="subcellular location">
    <subcellularLocation>
        <location evidence="5 6 7">Cell projection</location>
        <location evidence="5 6 7">Cilium</location>
    </subcellularLocation>
    <subcellularLocation>
        <location evidence="4 5">Cytoplasm</location>
        <location evidence="4 5">Cytoskeleton</location>
        <location evidence="4 5">Cilium basal body</location>
    </subcellularLocation>
    <subcellularLocation>
        <location evidence="1">Mitochondrion</location>
    </subcellularLocation>
    <subcellularLocation>
        <location evidence="1">Cell projection</location>
        <location evidence="1">Cilium</location>
        <location evidence="1">Photoreceptor outer segment</location>
    </subcellularLocation>
    <subcellularLocation>
        <location evidence="1">Cytoplasm</location>
    </subcellularLocation>
    <text evidence="1 4 6 7">Localized to the connecting cilium of the cone and rod photoreceptors (PubMed:26974433, PubMed:27548899). Colocalizes with NEK1 and SPATA7 at the basal body (By similarity).</text>
</comment>
<comment type="tissue specificity">
    <text evidence="4 5">Expressed in the retina.</text>
</comment>
<comment type="induction">
    <text>Up-regulated during cartilage differentiation (PubMed:26974433).</text>
</comment>
<comment type="disruption phenotype">
    <text>Cilia absent or reduced, virtually no cilia of the normal 5 uM mean length.</text>
</comment>
<organism>
    <name type="scientific">Mus musculus</name>
    <name type="common">Mouse</name>
    <dbReference type="NCBI Taxonomy" id="10090"/>
    <lineage>
        <taxon>Eukaryota</taxon>
        <taxon>Metazoa</taxon>
        <taxon>Chordata</taxon>
        <taxon>Craniata</taxon>
        <taxon>Vertebrata</taxon>
        <taxon>Euteleostomi</taxon>
        <taxon>Mammalia</taxon>
        <taxon>Eutheria</taxon>
        <taxon>Euarchontoglires</taxon>
        <taxon>Glires</taxon>
        <taxon>Rodentia</taxon>
        <taxon>Myomorpha</taxon>
        <taxon>Muroidea</taxon>
        <taxon>Muridae</taxon>
        <taxon>Murinae</taxon>
        <taxon>Mus</taxon>
        <taxon>Mus</taxon>
    </lineage>
</organism>
<sequence length="249" mass="28239">MKLTRKMVLSRAKASELHNVRKLNCWGSQLTDISICREMPSLEVITLSVNSVSTLEPVRSCRRLSELYLRRNRIPSLNELFYLKDLPHLRVLWLAENPCCGTSPHLYRMTVLRNLPHLQKLDNQAVTEEELTRALMEGDEITAAPHREGAGNGCPKPPYALNSVSSATETSQHLLSYTEETEVQGQTTTDQSPSFSPRDTMRSHKNRNILTAILLLLRELDTEGLETVQQTVGSRLQALHRPEPQEDME</sequence>
<gene>
    <name evidence="1" type="primary">Cfap410</name>
</gene>
<proteinExistence type="evidence at protein level"/>
<name>CF410_MOUSE</name>